<proteinExistence type="inferred from homology"/>
<protein>
    <recommendedName>
        <fullName>Putative UPF0496 protein 5</fullName>
    </recommendedName>
</protein>
<organism>
    <name type="scientific">Oryza sativa subsp. japonica</name>
    <name type="common">Rice</name>
    <dbReference type="NCBI Taxonomy" id="39947"/>
    <lineage>
        <taxon>Eukaryota</taxon>
        <taxon>Viridiplantae</taxon>
        <taxon>Streptophyta</taxon>
        <taxon>Embryophyta</taxon>
        <taxon>Tracheophyta</taxon>
        <taxon>Spermatophyta</taxon>
        <taxon>Magnoliopsida</taxon>
        <taxon>Liliopsida</taxon>
        <taxon>Poales</taxon>
        <taxon>Poaceae</taxon>
        <taxon>BOP clade</taxon>
        <taxon>Oryzoideae</taxon>
        <taxon>Oryzeae</taxon>
        <taxon>Oryzinae</taxon>
        <taxon>Oryza</taxon>
        <taxon>Oryza sativa</taxon>
    </lineage>
</organism>
<comment type="subcellular location">
    <subcellularLocation>
        <location evidence="3">Membrane</location>
        <topology evidence="3">Multi-pass membrane protein</topology>
    </subcellularLocation>
</comment>
<comment type="similarity">
    <text evidence="3">Belongs to the UPF0496 family.</text>
</comment>
<comment type="sequence caution" evidence="3">
    <conflict type="erroneous gene model prediction">
        <sequence resource="EMBL-CDS" id="AAL58139"/>
    </conflict>
</comment>
<dbReference type="EMBL" id="AC093093">
    <property type="protein sequence ID" value="AAL58139.1"/>
    <property type="status" value="ALT_SEQ"/>
    <property type="molecule type" value="Genomic_DNA"/>
</dbReference>
<dbReference type="EMBL" id="DP000086">
    <property type="protein sequence ID" value="AAP53285.2"/>
    <property type="molecule type" value="Genomic_DNA"/>
</dbReference>
<dbReference type="EMBL" id="AP014966">
    <property type="status" value="NOT_ANNOTATED_CDS"/>
    <property type="molecule type" value="Genomic_DNA"/>
</dbReference>
<dbReference type="EMBL" id="CM000147">
    <property type="status" value="NOT_ANNOTATED_CDS"/>
    <property type="molecule type" value="Genomic_DNA"/>
</dbReference>
<dbReference type="SMR" id="Q7XFE1"/>
<dbReference type="STRING" id="39947.Q7XFE1"/>
<dbReference type="PaxDb" id="39947-Q7XFE1"/>
<dbReference type="KEGG" id="osa:107277196"/>
<dbReference type="eggNOG" id="ENOG502QQBT">
    <property type="taxonomic scope" value="Eukaryota"/>
</dbReference>
<dbReference type="InParanoid" id="Q7XFE1"/>
<dbReference type="OrthoDB" id="679959at2759"/>
<dbReference type="Proteomes" id="UP000000763">
    <property type="component" value="Chromosome 10"/>
</dbReference>
<dbReference type="Proteomes" id="UP000007752">
    <property type="component" value="Chromosome 10"/>
</dbReference>
<dbReference type="Proteomes" id="UP000059680">
    <property type="component" value="Chromosome 10"/>
</dbReference>
<dbReference type="GO" id="GO:0016020">
    <property type="term" value="C:membrane"/>
    <property type="evidence" value="ECO:0007669"/>
    <property type="project" value="UniProtKB-SubCell"/>
</dbReference>
<dbReference type="InterPro" id="IPR007749">
    <property type="entry name" value="DUF677"/>
</dbReference>
<dbReference type="PANTHER" id="PTHR31113">
    <property type="entry name" value="UPF0496 PROTEIN 3-RELATED"/>
    <property type="match status" value="1"/>
</dbReference>
<dbReference type="PANTHER" id="PTHR31113:SF21">
    <property type="entry name" value="UPF0496 PROTEIN 5-RELATED"/>
    <property type="match status" value="1"/>
</dbReference>
<dbReference type="Pfam" id="PF05055">
    <property type="entry name" value="DUF677"/>
    <property type="match status" value="1"/>
</dbReference>
<accession>Q7XFE1</accession>
<accession>Q8W2W3</accession>
<gene>
    <name type="ordered locus">Os10g0359200</name>
    <name type="ordered locus">LOC_Os10g21540</name>
    <name type="ORF">OsJ_030007</name>
    <name type="ORF">OSJNBb0076H04.9</name>
</gene>
<sequence>MGNRHGIMRPRRLASGRSAAEEEEDGEGEPGSYEAACSADPELGTFDTALRRRASRAITAVASGVEVRSLSLGSLREVTGCLLDMNQEVVRVVLDCKRDVWRSPDLFDLVEDYFEGSLHTLDFLAALDKSLHRARDSQLVLHLALQRHHHEPPAAASASELYASTLGELRQFKAAGEPFTDEFFAAFQTVYRQQMSMVGKLRRRKRRLDRRLRSVRVWRRVSGIVFLTSFAALLVCSVVAAAIAAPPVAAALAAAASMPVGSAGKWMDSLLKKYQDALHGHKEVVSAMQVGTFIAIKDLDSIRVLVEHLEVQISSMADSVEFAERDEEAVRFGIDEVKKKLELFMKSVDDLGEQADRNNMRMCHILPEYVFFINLANGNGMSESLFEMMNAFHDICRKDIKFKTSHYYLNFLSSSYQVYIAVA</sequence>
<keyword id="KW-0472">Membrane</keyword>
<keyword id="KW-1185">Reference proteome</keyword>
<keyword id="KW-0812">Transmembrane</keyword>
<keyword id="KW-1133">Transmembrane helix</keyword>
<name>U496E_ORYSJ</name>
<evidence type="ECO:0000255" key="1"/>
<evidence type="ECO:0000256" key="2">
    <source>
        <dbReference type="SAM" id="MobiDB-lite"/>
    </source>
</evidence>
<evidence type="ECO:0000305" key="3"/>
<reference key="1">
    <citation type="journal article" date="2003" name="Science">
        <title>In-depth view of structure, activity, and evolution of rice chromosome 10.</title>
        <authorList>
            <person name="Yu Y."/>
            <person name="Rambo T."/>
            <person name="Currie J."/>
            <person name="Saski C."/>
            <person name="Kim H.-R."/>
            <person name="Collura K."/>
            <person name="Thompson S."/>
            <person name="Simmons J."/>
            <person name="Yang T.-J."/>
            <person name="Nah G."/>
            <person name="Patel A.J."/>
            <person name="Thurmond S."/>
            <person name="Henry D."/>
            <person name="Oates R."/>
            <person name="Palmer M."/>
            <person name="Pries G."/>
            <person name="Gibson J."/>
            <person name="Anderson H."/>
            <person name="Paradkar M."/>
            <person name="Crane L."/>
            <person name="Dale J."/>
            <person name="Carver M.B."/>
            <person name="Wood T."/>
            <person name="Frisch D."/>
            <person name="Engler F."/>
            <person name="Soderlund C."/>
            <person name="Palmer L.E."/>
            <person name="Teytelman L."/>
            <person name="Nascimento L."/>
            <person name="De la Bastide M."/>
            <person name="Spiegel L."/>
            <person name="Ware D."/>
            <person name="O'Shaughnessy A."/>
            <person name="Dike S."/>
            <person name="Dedhia N."/>
            <person name="Preston R."/>
            <person name="Huang E."/>
            <person name="Ferraro K."/>
            <person name="Kuit K."/>
            <person name="Miller B."/>
            <person name="Zutavern T."/>
            <person name="Katzenberger F."/>
            <person name="Muller S."/>
            <person name="Balija V."/>
            <person name="Martienssen R.A."/>
            <person name="Stein L."/>
            <person name="Minx P."/>
            <person name="Johnson D."/>
            <person name="Cordum H."/>
            <person name="Mardis E."/>
            <person name="Cheng Z."/>
            <person name="Jiang J."/>
            <person name="Wilson R."/>
            <person name="McCombie W.R."/>
            <person name="Wing R.A."/>
            <person name="Yuan Q."/>
            <person name="Ouyang S."/>
            <person name="Liu J."/>
            <person name="Jones K.M."/>
            <person name="Gansberger K."/>
            <person name="Moffat K."/>
            <person name="Hill J."/>
            <person name="Tsitrin T."/>
            <person name="Overton L."/>
            <person name="Bera J."/>
            <person name="Kim M."/>
            <person name="Jin S."/>
            <person name="Tallon L."/>
            <person name="Ciecko A."/>
            <person name="Pai G."/>
            <person name="Van Aken S."/>
            <person name="Utterback T."/>
            <person name="Reidmuller S."/>
            <person name="Bormann J."/>
            <person name="Feldblyum T."/>
            <person name="Hsiao J."/>
            <person name="Zismann V."/>
            <person name="Blunt S."/>
            <person name="de Vazeille A.R."/>
            <person name="Shaffer T."/>
            <person name="Koo H."/>
            <person name="Suh B."/>
            <person name="Yang Q."/>
            <person name="Haas B."/>
            <person name="Peterson J."/>
            <person name="Pertea M."/>
            <person name="Volfovsky N."/>
            <person name="Wortman J."/>
            <person name="White O."/>
            <person name="Salzberg S.L."/>
            <person name="Fraser C.M."/>
            <person name="Buell C.R."/>
            <person name="Messing J."/>
            <person name="Song R."/>
            <person name="Fuks G."/>
            <person name="Llaca V."/>
            <person name="Kovchak S."/>
            <person name="Young S."/>
            <person name="Bowers J.E."/>
            <person name="Paterson A.H."/>
            <person name="Johns M.A."/>
            <person name="Mao L."/>
            <person name="Pan H."/>
            <person name="Dean R.A."/>
        </authorList>
    </citation>
    <scope>NUCLEOTIDE SEQUENCE [LARGE SCALE GENOMIC DNA]</scope>
    <source>
        <strain>cv. Nipponbare</strain>
    </source>
</reference>
<reference key="2">
    <citation type="journal article" date="2005" name="Nature">
        <title>The map-based sequence of the rice genome.</title>
        <authorList>
            <consortium name="International rice genome sequencing project (IRGSP)"/>
        </authorList>
    </citation>
    <scope>NUCLEOTIDE SEQUENCE [LARGE SCALE GENOMIC DNA]</scope>
    <source>
        <strain>cv. Nipponbare</strain>
    </source>
</reference>
<reference key="3">
    <citation type="journal article" date="2013" name="Rice">
        <title>Improvement of the Oryza sativa Nipponbare reference genome using next generation sequence and optical map data.</title>
        <authorList>
            <person name="Kawahara Y."/>
            <person name="de la Bastide M."/>
            <person name="Hamilton J.P."/>
            <person name="Kanamori H."/>
            <person name="McCombie W.R."/>
            <person name="Ouyang S."/>
            <person name="Schwartz D.C."/>
            <person name="Tanaka T."/>
            <person name="Wu J."/>
            <person name="Zhou S."/>
            <person name="Childs K.L."/>
            <person name="Davidson R.M."/>
            <person name="Lin H."/>
            <person name="Quesada-Ocampo L."/>
            <person name="Vaillancourt B."/>
            <person name="Sakai H."/>
            <person name="Lee S.S."/>
            <person name="Kim J."/>
            <person name="Numa H."/>
            <person name="Itoh T."/>
            <person name="Buell C.R."/>
            <person name="Matsumoto T."/>
        </authorList>
    </citation>
    <scope>GENOME REANNOTATION</scope>
    <source>
        <strain>cv. Nipponbare</strain>
    </source>
</reference>
<reference key="4">
    <citation type="journal article" date="2005" name="PLoS Biol.">
        <title>The genomes of Oryza sativa: a history of duplications.</title>
        <authorList>
            <person name="Yu J."/>
            <person name="Wang J."/>
            <person name="Lin W."/>
            <person name="Li S."/>
            <person name="Li H."/>
            <person name="Zhou J."/>
            <person name="Ni P."/>
            <person name="Dong W."/>
            <person name="Hu S."/>
            <person name="Zeng C."/>
            <person name="Zhang J."/>
            <person name="Zhang Y."/>
            <person name="Li R."/>
            <person name="Xu Z."/>
            <person name="Li S."/>
            <person name="Li X."/>
            <person name="Zheng H."/>
            <person name="Cong L."/>
            <person name="Lin L."/>
            <person name="Yin J."/>
            <person name="Geng J."/>
            <person name="Li G."/>
            <person name="Shi J."/>
            <person name="Liu J."/>
            <person name="Lv H."/>
            <person name="Li J."/>
            <person name="Wang J."/>
            <person name="Deng Y."/>
            <person name="Ran L."/>
            <person name="Shi X."/>
            <person name="Wang X."/>
            <person name="Wu Q."/>
            <person name="Li C."/>
            <person name="Ren X."/>
            <person name="Wang J."/>
            <person name="Wang X."/>
            <person name="Li D."/>
            <person name="Liu D."/>
            <person name="Zhang X."/>
            <person name="Ji Z."/>
            <person name="Zhao W."/>
            <person name="Sun Y."/>
            <person name="Zhang Z."/>
            <person name="Bao J."/>
            <person name="Han Y."/>
            <person name="Dong L."/>
            <person name="Ji J."/>
            <person name="Chen P."/>
            <person name="Wu S."/>
            <person name="Liu J."/>
            <person name="Xiao Y."/>
            <person name="Bu D."/>
            <person name="Tan J."/>
            <person name="Yang L."/>
            <person name="Ye C."/>
            <person name="Zhang J."/>
            <person name="Xu J."/>
            <person name="Zhou Y."/>
            <person name="Yu Y."/>
            <person name="Zhang B."/>
            <person name="Zhuang S."/>
            <person name="Wei H."/>
            <person name="Liu B."/>
            <person name="Lei M."/>
            <person name="Yu H."/>
            <person name="Li Y."/>
            <person name="Xu H."/>
            <person name="Wei S."/>
            <person name="He X."/>
            <person name="Fang L."/>
            <person name="Zhang Z."/>
            <person name="Zhang Y."/>
            <person name="Huang X."/>
            <person name="Su Z."/>
            <person name="Tong W."/>
            <person name="Li J."/>
            <person name="Tong Z."/>
            <person name="Li S."/>
            <person name="Ye J."/>
            <person name="Wang L."/>
            <person name="Fang L."/>
            <person name="Lei T."/>
            <person name="Chen C.-S."/>
            <person name="Chen H.-C."/>
            <person name="Xu Z."/>
            <person name="Li H."/>
            <person name="Huang H."/>
            <person name="Zhang F."/>
            <person name="Xu H."/>
            <person name="Li N."/>
            <person name="Zhao C."/>
            <person name="Li S."/>
            <person name="Dong L."/>
            <person name="Huang Y."/>
            <person name="Li L."/>
            <person name="Xi Y."/>
            <person name="Qi Q."/>
            <person name="Li W."/>
            <person name="Zhang B."/>
            <person name="Hu W."/>
            <person name="Zhang Y."/>
            <person name="Tian X."/>
            <person name="Jiao Y."/>
            <person name="Liang X."/>
            <person name="Jin J."/>
            <person name="Gao L."/>
            <person name="Zheng W."/>
            <person name="Hao B."/>
            <person name="Liu S.-M."/>
            <person name="Wang W."/>
            <person name="Yuan L."/>
            <person name="Cao M."/>
            <person name="McDermott J."/>
            <person name="Samudrala R."/>
            <person name="Wang J."/>
            <person name="Wong G.K.-S."/>
            <person name="Yang H."/>
        </authorList>
    </citation>
    <scope>NUCLEOTIDE SEQUENCE [LARGE SCALE GENOMIC DNA]</scope>
    <source>
        <strain>cv. Nipponbare</strain>
    </source>
</reference>
<feature type="chain" id="PRO_0000306913" description="Putative UPF0496 protein 5">
    <location>
        <begin position="1"/>
        <end position="423"/>
    </location>
</feature>
<feature type="transmembrane region" description="Helical" evidence="1">
    <location>
        <begin position="224"/>
        <end position="244"/>
    </location>
</feature>
<feature type="transmembrane region" description="Helical" evidence="1">
    <location>
        <begin position="247"/>
        <end position="267"/>
    </location>
</feature>
<feature type="region of interest" description="Disordered" evidence="2">
    <location>
        <begin position="1"/>
        <end position="37"/>
    </location>
</feature>
<feature type="compositionally biased region" description="Basic residues" evidence="2">
    <location>
        <begin position="1"/>
        <end position="14"/>
    </location>
</feature>